<sequence>MTGTGRTVTRVDLCEAVYQKVGLSRTESSAFVELVLKEITDCLEKGETVKLSSFGSFLVRQKGQRIGRNPKTGTEVPISPRRVMVFKPSAILKQRINANGTASSMSSSANAAAGDKSESASGT</sequence>
<accession>Q2IWQ7</accession>
<comment type="function">
    <text evidence="1">This protein is one of the two subunits of integration host factor, a specific DNA-binding protein that functions in genetic recombination as well as in transcriptional and translational control.</text>
</comment>
<comment type="subunit">
    <text evidence="1">Heterodimer of an alpha and a beta chain.</text>
</comment>
<comment type="similarity">
    <text evidence="1">Belongs to the bacterial histone-like protein family.</text>
</comment>
<dbReference type="EMBL" id="CP000250">
    <property type="protein sequence ID" value="ABD07353.1"/>
    <property type="molecule type" value="Genomic_DNA"/>
</dbReference>
<dbReference type="RefSeq" id="WP_011441538.1">
    <property type="nucleotide sequence ID" value="NC_007778.1"/>
</dbReference>
<dbReference type="SMR" id="Q2IWQ7"/>
<dbReference type="STRING" id="316058.RPB_2651"/>
<dbReference type="KEGG" id="rpb:RPB_2651"/>
<dbReference type="eggNOG" id="COG0776">
    <property type="taxonomic scope" value="Bacteria"/>
</dbReference>
<dbReference type="HOGENOM" id="CLU_105066_1_1_5"/>
<dbReference type="OrthoDB" id="9797747at2"/>
<dbReference type="Proteomes" id="UP000008809">
    <property type="component" value="Chromosome"/>
</dbReference>
<dbReference type="GO" id="GO:0005829">
    <property type="term" value="C:cytosol"/>
    <property type="evidence" value="ECO:0007669"/>
    <property type="project" value="TreeGrafter"/>
</dbReference>
<dbReference type="GO" id="GO:0003677">
    <property type="term" value="F:DNA binding"/>
    <property type="evidence" value="ECO:0007669"/>
    <property type="project" value="UniProtKB-UniRule"/>
</dbReference>
<dbReference type="GO" id="GO:0030527">
    <property type="term" value="F:structural constituent of chromatin"/>
    <property type="evidence" value="ECO:0007669"/>
    <property type="project" value="InterPro"/>
</dbReference>
<dbReference type="GO" id="GO:0006310">
    <property type="term" value="P:DNA recombination"/>
    <property type="evidence" value="ECO:0007669"/>
    <property type="project" value="UniProtKB-UniRule"/>
</dbReference>
<dbReference type="GO" id="GO:0009893">
    <property type="term" value="P:positive regulation of metabolic process"/>
    <property type="evidence" value="ECO:0007669"/>
    <property type="project" value="UniProtKB-ARBA"/>
</dbReference>
<dbReference type="GO" id="GO:0006355">
    <property type="term" value="P:regulation of DNA-templated transcription"/>
    <property type="evidence" value="ECO:0007669"/>
    <property type="project" value="UniProtKB-UniRule"/>
</dbReference>
<dbReference type="GO" id="GO:0006417">
    <property type="term" value="P:regulation of translation"/>
    <property type="evidence" value="ECO:0007669"/>
    <property type="project" value="UniProtKB-UniRule"/>
</dbReference>
<dbReference type="CDD" id="cd13835">
    <property type="entry name" value="IHF_A"/>
    <property type="match status" value="1"/>
</dbReference>
<dbReference type="FunFam" id="4.10.520.10:FF:000010">
    <property type="entry name" value="Integration host factor subunit alpha"/>
    <property type="match status" value="1"/>
</dbReference>
<dbReference type="Gene3D" id="4.10.520.10">
    <property type="entry name" value="IHF-like DNA-binding proteins"/>
    <property type="match status" value="1"/>
</dbReference>
<dbReference type="HAMAP" id="MF_00380">
    <property type="entry name" value="IHF_alpha"/>
    <property type="match status" value="1"/>
</dbReference>
<dbReference type="InterPro" id="IPR000119">
    <property type="entry name" value="Hist_DNA-bd"/>
</dbReference>
<dbReference type="InterPro" id="IPR020816">
    <property type="entry name" value="Histone-like_DNA-bd_CS"/>
</dbReference>
<dbReference type="InterPro" id="IPR010992">
    <property type="entry name" value="IHF-like_DNA-bd_dom_sf"/>
</dbReference>
<dbReference type="InterPro" id="IPR005684">
    <property type="entry name" value="IHF_alpha"/>
</dbReference>
<dbReference type="NCBIfam" id="TIGR00987">
    <property type="entry name" value="himA"/>
    <property type="match status" value="1"/>
</dbReference>
<dbReference type="NCBIfam" id="NF001401">
    <property type="entry name" value="PRK00285.1"/>
    <property type="match status" value="1"/>
</dbReference>
<dbReference type="PANTHER" id="PTHR33175">
    <property type="entry name" value="DNA-BINDING PROTEIN HU"/>
    <property type="match status" value="1"/>
</dbReference>
<dbReference type="PANTHER" id="PTHR33175:SF2">
    <property type="entry name" value="INTEGRATION HOST FACTOR SUBUNIT ALPHA"/>
    <property type="match status" value="1"/>
</dbReference>
<dbReference type="Pfam" id="PF00216">
    <property type="entry name" value="Bac_DNA_binding"/>
    <property type="match status" value="1"/>
</dbReference>
<dbReference type="PRINTS" id="PR01727">
    <property type="entry name" value="DNABINDINGHU"/>
</dbReference>
<dbReference type="SMART" id="SM00411">
    <property type="entry name" value="BHL"/>
    <property type="match status" value="1"/>
</dbReference>
<dbReference type="SUPFAM" id="SSF47729">
    <property type="entry name" value="IHF-like DNA-binding proteins"/>
    <property type="match status" value="1"/>
</dbReference>
<dbReference type="PROSITE" id="PS00045">
    <property type="entry name" value="HISTONE_LIKE"/>
    <property type="match status" value="1"/>
</dbReference>
<reference key="1">
    <citation type="submission" date="2006-01" db="EMBL/GenBank/DDBJ databases">
        <title>Complete sequence of Rhodopseudomonas palustris HaA2.</title>
        <authorList>
            <consortium name="US DOE Joint Genome Institute"/>
            <person name="Copeland A."/>
            <person name="Lucas S."/>
            <person name="Lapidus A."/>
            <person name="Barry K."/>
            <person name="Detter J.C."/>
            <person name="Glavina T."/>
            <person name="Hammon N."/>
            <person name="Israni S."/>
            <person name="Pitluck S."/>
            <person name="Chain P."/>
            <person name="Malfatti S."/>
            <person name="Shin M."/>
            <person name="Vergez L."/>
            <person name="Schmutz J."/>
            <person name="Larimer F."/>
            <person name="Land M."/>
            <person name="Hauser L."/>
            <person name="Pelletier D.A."/>
            <person name="Kyrpides N."/>
            <person name="Anderson I."/>
            <person name="Oda Y."/>
            <person name="Harwood C.S."/>
            <person name="Richardson P."/>
        </authorList>
    </citation>
    <scope>NUCLEOTIDE SEQUENCE [LARGE SCALE GENOMIC DNA]</scope>
    <source>
        <strain>HaA2</strain>
    </source>
</reference>
<organism>
    <name type="scientific">Rhodopseudomonas palustris (strain HaA2)</name>
    <dbReference type="NCBI Taxonomy" id="316058"/>
    <lineage>
        <taxon>Bacteria</taxon>
        <taxon>Pseudomonadati</taxon>
        <taxon>Pseudomonadota</taxon>
        <taxon>Alphaproteobacteria</taxon>
        <taxon>Hyphomicrobiales</taxon>
        <taxon>Nitrobacteraceae</taxon>
        <taxon>Rhodopseudomonas</taxon>
    </lineage>
</organism>
<gene>
    <name evidence="1" type="primary">ihfA</name>
    <name evidence="1" type="synonym">himA</name>
    <name type="ordered locus">RPB_2651</name>
</gene>
<evidence type="ECO:0000255" key="1">
    <source>
        <dbReference type="HAMAP-Rule" id="MF_00380"/>
    </source>
</evidence>
<evidence type="ECO:0000256" key="2">
    <source>
        <dbReference type="SAM" id="MobiDB-lite"/>
    </source>
</evidence>
<proteinExistence type="inferred from homology"/>
<feature type="chain" id="PRO_1000060560" description="Integration host factor subunit alpha">
    <location>
        <begin position="1"/>
        <end position="123"/>
    </location>
</feature>
<feature type="region of interest" description="Disordered" evidence="2">
    <location>
        <begin position="97"/>
        <end position="123"/>
    </location>
</feature>
<feature type="compositionally biased region" description="Low complexity" evidence="2">
    <location>
        <begin position="102"/>
        <end position="113"/>
    </location>
</feature>
<name>IHFA_RHOP2</name>
<protein>
    <recommendedName>
        <fullName evidence="1">Integration host factor subunit alpha</fullName>
        <shortName evidence="1">IHF-alpha</shortName>
    </recommendedName>
</protein>
<keyword id="KW-0233">DNA recombination</keyword>
<keyword id="KW-0238">DNA-binding</keyword>
<keyword id="KW-1185">Reference proteome</keyword>
<keyword id="KW-0804">Transcription</keyword>
<keyword id="KW-0805">Transcription regulation</keyword>
<keyword id="KW-0810">Translation regulation</keyword>